<gene>
    <name type="primary">CRYBA2</name>
</gene>
<keyword id="KW-0273">Eye lens protein</keyword>
<keyword id="KW-1185">Reference proteome</keyword>
<keyword id="KW-0677">Repeat</keyword>
<feature type="chain" id="PRO_0000289611" description="Beta-crystallin A2">
    <location>
        <begin position="1"/>
        <end position="197"/>
    </location>
</feature>
<feature type="domain" description="Beta/gamma crystallin 'Greek key' 1" evidence="2">
    <location>
        <begin position="12"/>
        <end position="52"/>
    </location>
</feature>
<feature type="domain" description="Beta/gamma crystallin 'Greek key' 2" evidence="2">
    <location>
        <begin position="53"/>
        <end position="99"/>
    </location>
</feature>
<feature type="domain" description="Beta/gamma crystallin 'Greek key' 3" evidence="2">
    <location>
        <begin position="106"/>
        <end position="147"/>
    </location>
</feature>
<feature type="domain" description="Beta/gamma crystallin 'Greek key' 4" evidence="2">
    <location>
        <begin position="148"/>
        <end position="196"/>
    </location>
</feature>
<feature type="region of interest" description="N-terminal arm">
    <location>
        <begin position="1"/>
        <end position="11"/>
    </location>
</feature>
<feature type="region of interest" description="Connecting peptide">
    <location>
        <begin position="100"/>
        <end position="105"/>
    </location>
</feature>
<sequence>MSSASAPGPAPACLTLWDEEDFQGRRCRLLSDCANVGERGGLRRVRSVKVENGAWVAFEYPDFQGQQFILEKGDYPRWSAWSGSSGHHSNQLLSFRPVLCANHSDSRVTLFEGENFQGCKFELSDDYPSLPSMGWASKEVGSLKVSSGAWVAYQYPGYRGYQYVLERDRHSGEFRNYSEFGTQAHTGQLQSIRRVQH</sequence>
<evidence type="ECO:0000250" key="1"/>
<evidence type="ECO:0000255" key="2">
    <source>
        <dbReference type="PROSITE-ProRule" id="PRU00028"/>
    </source>
</evidence>
<evidence type="ECO:0000305" key="3"/>
<reference key="1">
    <citation type="submission" date="2007-02" db="EMBL/GenBank/DDBJ databases">
        <authorList>
            <person name="Wistow G."/>
        </authorList>
    </citation>
    <scope>NUCLEOTIDE SEQUENCE [MRNA]</scope>
    <source>
        <tissue>Lens</tissue>
    </source>
</reference>
<comment type="function">
    <text evidence="1">Crystallins are the dominant structural components of the vertebrate eye lens.</text>
</comment>
<comment type="subunit">
    <text evidence="1">Homo/heterodimer, or complexes of higher-order. The structure of beta-crystallin oligomers seems to be stabilized through interactions between the N-terminal arms (By similarity).</text>
</comment>
<comment type="domain">
    <text>Has a two-domain beta-structure, folded into four very similar Greek key motifs.</text>
</comment>
<comment type="similarity">
    <text evidence="3">Belongs to the beta/gamma-crystallin family.</text>
</comment>
<accession>A4L9I9</accession>
<protein>
    <recommendedName>
        <fullName>Beta-crystallin A2</fullName>
    </recommendedName>
    <alternativeName>
        <fullName>Beta-A2 crystallin</fullName>
    </alternativeName>
</protein>
<name>CRBA2_RABIT</name>
<organism>
    <name type="scientific">Oryctolagus cuniculus</name>
    <name type="common">Rabbit</name>
    <dbReference type="NCBI Taxonomy" id="9986"/>
    <lineage>
        <taxon>Eukaryota</taxon>
        <taxon>Metazoa</taxon>
        <taxon>Chordata</taxon>
        <taxon>Craniata</taxon>
        <taxon>Vertebrata</taxon>
        <taxon>Euteleostomi</taxon>
        <taxon>Mammalia</taxon>
        <taxon>Eutheria</taxon>
        <taxon>Euarchontoglires</taxon>
        <taxon>Glires</taxon>
        <taxon>Lagomorpha</taxon>
        <taxon>Leporidae</taxon>
        <taxon>Oryctolagus</taxon>
    </lineage>
</organism>
<dbReference type="EMBL" id="EF457886">
    <property type="protein sequence ID" value="ABO41862.1"/>
    <property type="molecule type" value="mRNA"/>
</dbReference>
<dbReference type="RefSeq" id="NP_001093440.1">
    <property type="nucleotide sequence ID" value="NM_001099970.1"/>
</dbReference>
<dbReference type="SMR" id="A4L9I9"/>
<dbReference type="FunCoup" id="A4L9I9">
    <property type="interactions" value="1"/>
</dbReference>
<dbReference type="STRING" id="9986.ENSOCUP00000000183"/>
<dbReference type="PaxDb" id="9986-ENSOCUP00000000183"/>
<dbReference type="Ensembl" id="ENSOCUT00000000206.3">
    <property type="protein sequence ID" value="ENSOCUP00000000183.2"/>
    <property type="gene ID" value="ENSOCUG00000000206.3"/>
</dbReference>
<dbReference type="GeneID" id="100101619"/>
<dbReference type="KEGG" id="ocu:100101619"/>
<dbReference type="CTD" id="1412"/>
<dbReference type="eggNOG" id="ENOG502QVIR">
    <property type="taxonomic scope" value="Eukaryota"/>
</dbReference>
<dbReference type="GeneTree" id="ENSGT00940000160306"/>
<dbReference type="HOGENOM" id="CLU_081883_0_0_1"/>
<dbReference type="InParanoid" id="A4L9I9"/>
<dbReference type="OMA" id="SDCANIA"/>
<dbReference type="OrthoDB" id="10067219at2759"/>
<dbReference type="TreeFam" id="TF331401"/>
<dbReference type="Proteomes" id="UP000001811">
    <property type="component" value="Chromosome 7"/>
</dbReference>
<dbReference type="Bgee" id="ENSOCUG00000000206">
    <property type="expression patterns" value="Expressed in embryo and 2 other cell types or tissues"/>
</dbReference>
<dbReference type="GO" id="GO:0042802">
    <property type="term" value="F:identical protein binding"/>
    <property type="evidence" value="ECO:0007669"/>
    <property type="project" value="Ensembl"/>
</dbReference>
<dbReference type="GO" id="GO:0005212">
    <property type="term" value="F:structural constituent of eye lens"/>
    <property type="evidence" value="ECO:0007669"/>
    <property type="project" value="UniProtKB-KW"/>
</dbReference>
<dbReference type="GO" id="GO:0002088">
    <property type="term" value="P:lens development in camera-type eye"/>
    <property type="evidence" value="ECO:0007669"/>
    <property type="project" value="Ensembl"/>
</dbReference>
<dbReference type="GO" id="GO:0007601">
    <property type="term" value="P:visual perception"/>
    <property type="evidence" value="ECO:0007669"/>
    <property type="project" value="TreeGrafter"/>
</dbReference>
<dbReference type="FunFam" id="2.60.20.10:FF:000012">
    <property type="entry name" value="Beta-crystallin A2"/>
    <property type="match status" value="1"/>
</dbReference>
<dbReference type="FunFam" id="2.60.20.10:FF:000004">
    <property type="entry name" value="Crystallin beta A4"/>
    <property type="match status" value="1"/>
</dbReference>
<dbReference type="Gene3D" id="2.60.20.10">
    <property type="entry name" value="Crystallins"/>
    <property type="match status" value="2"/>
</dbReference>
<dbReference type="InterPro" id="IPR050252">
    <property type="entry name" value="Beta/Gamma-Crystallin"/>
</dbReference>
<dbReference type="InterPro" id="IPR001064">
    <property type="entry name" value="Beta/gamma_crystallin"/>
</dbReference>
<dbReference type="InterPro" id="IPR011024">
    <property type="entry name" value="G_crystallin-like"/>
</dbReference>
<dbReference type="PANTHER" id="PTHR11818:SF7">
    <property type="entry name" value="BETA-CRYSTALLIN A2"/>
    <property type="match status" value="1"/>
</dbReference>
<dbReference type="PANTHER" id="PTHR11818">
    <property type="entry name" value="BETA/GAMMA CRYSTALLIN"/>
    <property type="match status" value="1"/>
</dbReference>
<dbReference type="Pfam" id="PF00030">
    <property type="entry name" value="Crystall"/>
    <property type="match status" value="2"/>
</dbReference>
<dbReference type="PRINTS" id="PR01367">
    <property type="entry name" value="BGCRYSTALLIN"/>
</dbReference>
<dbReference type="SMART" id="SM00247">
    <property type="entry name" value="XTALbg"/>
    <property type="match status" value="2"/>
</dbReference>
<dbReference type="SUPFAM" id="SSF49695">
    <property type="entry name" value="gamma-Crystallin-like"/>
    <property type="match status" value="1"/>
</dbReference>
<dbReference type="PROSITE" id="PS50915">
    <property type="entry name" value="CRYSTALLIN_BETA_GAMMA"/>
    <property type="match status" value="4"/>
</dbReference>
<proteinExistence type="evidence at transcript level"/>